<feature type="chain" id="PRO_0000157314" description="2-dehydropantoate 2-reductase">
    <location>
        <begin position="1"/>
        <end position="301"/>
    </location>
</feature>
<feature type="active site" description="Proton donor" evidence="1">
    <location>
        <position position="187"/>
    </location>
</feature>
<feature type="binding site" evidence="1">
    <location>
        <begin position="11"/>
        <end position="16"/>
    </location>
    <ligand>
        <name>NADP(+)</name>
        <dbReference type="ChEBI" id="CHEBI:58349"/>
    </ligand>
</feature>
<feature type="binding site" evidence="1">
    <location>
        <position position="107"/>
    </location>
    <ligand>
        <name>NADP(+)</name>
        <dbReference type="ChEBI" id="CHEBI:58349"/>
    </ligand>
</feature>
<feature type="binding site" evidence="1">
    <location>
        <position position="107"/>
    </location>
    <ligand>
        <name>substrate</name>
    </ligand>
</feature>
<feature type="binding site" evidence="1">
    <location>
        <position position="133"/>
    </location>
    <ligand>
        <name>NADP(+)</name>
        <dbReference type="ChEBI" id="CHEBI:58349"/>
    </ligand>
</feature>
<feature type="binding site" evidence="1">
    <location>
        <position position="191"/>
    </location>
    <ligand>
        <name>substrate</name>
    </ligand>
</feature>
<feature type="binding site" evidence="1">
    <location>
        <position position="195"/>
    </location>
    <ligand>
        <name>substrate</name>
    </ligand>
</feature>
<feature type="binding site" evidence="1">
    <location>
        <position position="205"/>
    </location>
    <ligand>
        <name>substrate</name>
    </ligand>
</feature>
<feature type="binding site" evidence="1">
    <location>
        <position position="251"/>
    </location>
    <ligand>
        <name>substrate</name>
    </ligand>
</feature>
<feature type="binding site" evidence="1">
    <location>
        <position position="263"/>
    </location>
    <ligand>
        <name>NADP(+)</name>
        <dbReference type="ChEBI" id="CHEBI:58349"/>
    </ligand>
</feature>
<sequence>MENQINVGIIGAGAMGLLYAANFADKSKLTLFTHRKEQADLLNQKGISLIDNETTKNIHIHAAQITEEEQLTKQQLLIIAVKQYSLNEIIPILQKLPTKIPILFIQNGAGHLERLSELGTTRTILLGISEHGAGREDDTTVIWRGHGRTKYSIFQGELNDDLKELLTSSPAFPIEKHANYQAIIQEKLFINAVINPLTAVLGVQNGKLLENQEWHRLLIRVVNEVETVLPIENALEKVETICRTTALNFSSMALDCMNERMTEIDGIVLPILEKGDKTETSLPTLRTLYQIIKGLEGERHV</sequence>
<keyword id="KW-0963">Cytoplasm</keyword>
<keyword id="KW-0521">NADP</keyword>
<keyword id="KW-0560">Oxidoreductase</keyword>
<keyword id="KW-0566">Pantothenate biosynthesis</keyword>
<reference key="1">
    <citation type="journal article" date="2001" name="Science">
        <title>Comparative genomics of Listeria species.</title>
        <authorList>
            <person name="Glaser P."/>
            <person name="Frangeul L."/>
            <person name="Buchrieser C."/>
            <person name="Rusniok C."/>
            <person name="Amend A."/>
            <person name="Baquero F."/>
            <person name="Berche P."/>
            <person name="Bloecker H."/>
            <person name="Brandt P."/>
            <person name="Chakraborty T."/>
            <person name="Charbit A."/>
            <person name="Chetouani F."/>
            <person name="Couve E."/>
            <person name="de Daruvar A."/>
            <person name="Dehoux P."/>
            <person name="Domann E."/>
            <person name="Dominguez-Bernal G."/>
            <person name="Duchaud E."/>
            <person name="Durant L."/>
            <person name="Dussurget O."/>
            <person name="Entian K.-D."/>
            <person name="Fsihi H."/>
            <person name="Garcia-del Portillo F."/>
            <person name="Garrido P."/>
            <person name="Gautier L."/>
            <person name="Goebel W."/>
            <person name="Gomez-Lopez N."/>
            <person name="Hain T."/>
            <person name="Hauf J."/>
            <person name="Jackson D."/>
            <person name="Jones L.-M."/>
            <person name="Kaerst U."/>
            <person name="Kreft J."/>
            <person name="Kuhn M."/>
            <person name="Kunst F."/>
            <person name="Kurapkat G."/>
            <person name="Madueno E."/>
            <person name="Maitournam A."/>
            <person name="Mata Vicente J."/>
            <person name="Ng E."/>
            <person name="Nedjari H."/>
            <person name="Nordsiek G."/>
            <person name="Novella S."/>
            <person name="de Pablos B."/>
            <person name="Perez-Diaz J.-C."/>
            <person name="Purcell R."/>
            <person name="Remmel B."/>
            <person name="Rose M."/>
            <person name="Schlueter T."/>
            <person name="Simoes N."/>
            <person name="Tierrez A."/>
            <person name="Vazquez-Boland J.-A."/>
            <person name="Voss H."/>
            <person name="Wehland J."/>
            <person name="Cossart P."/>
        </authorList>
    </citation>
    <scope>NUCLEOTIDE SEQUENCE [LARGE SCALE GENOMIC DNA]</scope>
    <source>
        <strain>ATCC BAA-680 / CLIP 11262</strain>
    </source>
</reference>
<protein>
    <recommendedName>
        <fullName evidence="1">2-dehydropantoate 2-reductase</fullName>
        <ecNumber evidence="1">1.1.1.169</ecNumber>
    </recommendedName>
    <alternativeName>
        <fullName evidence="1">Ketopantoate reductase</fullName>
        <shortName evidence="1">KPR</shortName>
    </alternativeName>
</protein>
<gene>
    <name type="ordered locus">lin2152</name>
</gene>
<organism>
    <name type="scientific">Listeria innocua serovar 6a (strain ATCC BAA-680 / CLIP 11262)</name>
    <dbReference type="NCBI Taxonomy" id="272626"/>
    <lineage>
        <taxon>Bacteria</taxon>
        <taxon>Bacillati</taxon>
        <taxon>Bacillota</taxon>
        <taxon>Bacilli</taxon>
        <taxon>Bacillales</taxon>
        <taxon>Listeriaceae</taxon>
        <taxon>Listeria</taxon>
    </lineage>
</organism>
<accession>Q929X1</accession>
<dbReference type="EC" id="1.1.1.169" evidence="1"/>
<dbReference type="EMBL" id="AL596171">
    <property type="protein sequence ID" value="CAC97382.1"/>
    <property type="molecule type" value="Genomic_DNA"/>
</dbReference>
<dbReference type="PIR" id="AF1701">
    <property type="entry name" value="AF1701"/>
</dbReference>
<dbReference type="RefSeq" id="WP_010991035.1">
    <property type="nucleotide sequence ID" value="NC_003212.1"/>
</dbReference>
<dbReference type="SMR" id="Q929X1"/>
<dbReference type="STRING" id="272626.gene:17566510"/>
<dbReference type="KEGG" id="lin:lin2152"/>
<dbReference type="eggNOG" id="COG1893">
    <property type="taxonomic scope" value="Bacteria"/>
</dbReference>
<dbReference type="HOGENOM" id="CLU_031468_0_1_9"/>
<dbReference type="OrthoDB" id="9800163at2"/>
<dbReference type="UniPathway" id="UPA00028">
    <property type="reaction ID" value="UER00004"/>
</dbReference>
<dbReference type="Proteomes" id="UP000002513">
    <property type="component" value="Chromosome"/>
</dbReference>
<dbReference type="GO" id="GO:0005737">
    <property type="term" value="C:cytoplasm"/>
    <property type="evidence" value="ECO:0007669"/>
    <property type="project" value="UniProtKB-SubCell"/>
</dbReference>
<dbReference type="GO" id="GO:0008677">
    <property type="term" value="F:2-dehydropantoate 2-reductase activity"/>
    <property type="evidence" value="ECO:0007669"/>
    <property type="project" value="UniProtKB-EC"/>
</dbReference>
<dbReference type="GO" id="GO:0050661">
    <property type="term" value="F:NADP binding"/>
    <property type="evidence" value="ECO:0007669"/>
    <property type="project" value="TreeGrafter"/>
</dbReference>
<dbReference type="GO" id="GO:0015940">
    <property type="term" value="P:pantothenate biosynthetic process"/>
    <property type="evidence" value="ECO:0007669"/>
    <property type="project" value="UniProtKB-UniPathway"/>
</dbReference>
<dbReference type="Gene3D" id="1.10.1040.10">
    <property type="entry name" value="N-(1-d-carboxylethyl)-l-norvaline Dehydrogenase, domain 2"/>
    <property type="match status" value="1"/>
</dbReference>
<dbReference type="Gene3D" id="3.40.50.720">
    <property type="entry name" value="NAD(P)-binding Rossmann-like Domain"/>
    <property type="match status" value="1"/>
</dbReference>
<dbReference type="InterPro" id="IPR008927">
    <property type="entry name" value="6-PGluconate_DH-like_C_sf"/>
</dbReference>
<dbReference type="InterPro" id="IPR013328">
    <property type="entry name" value="6PGD_dom2"/>
</dbReference>
<dbReference type="InterPro" id="IPR003710">
    <property type="entry name" value="ApbA"/>
</dbReference>
<dbReference type="InterPro" id="IPR050838">
    <property type="entry name" value="Ketopantoate_reductase"/>
</dbReference>
<dbReference type="InterPro" id="IPR013752">
    <property type="entry name" value="KPA_reductase"/>
</dbReference>
<dbReference type="InterPro" id="IPR013332">
    <property type="entry name" value="KPR_N"/>
</dbReference>
<dbReference type="InterPro" id="IPR036291">
    <property type="entry name" value="NAD(P)-bd_dom_sf"/>
</dbReference>
<dbReference type="NCBIfam" id="TIGR00745">
    <property type="entry name" value="apbA_panE"/>
    <property type="match status" value="1"/>
</dbReference>
<dbReference type="NCBIfam" id="NF005093">
    <property type="entry name" value="PRK06522.2-4"/>
    <property type="match status" value="1"/>
</dbReference>
<dbReference type="PANTHER" id="PTHR43765:SF2">
    <property type="entry name" value="2-DEHYDROPANTOATE 2-REDUCTASE"/>
    <property type="match status" value="1"/>
</dbReference>
<dbReference type="PANTHER" id="PTHR43765">
    <property type="entry name" value="2-DEHYDROPANTOATE 2-REDUCTASE-RELATED"/>
    <property type="match status" value="1"/>
</dbReference>
<dbReference type="Pfam" id="PF02558">
    <property type="entry name" value="ApbA"/>
    <property type="match status" value="1"/>
</dbReference>
<dbReference type="Pfam" id="PF08546">
    <property type="entry name" value="ApbA_C"/>
    <property type="match status" value="1"/>
</dbReference>
<dbReference type="SUPFAM" id="SSF48179">
    <property type="entry name" value="6-phosphogluconate dehydrogenase C-terminal domain-like"/>
    <property type="match status" value="1"/>
</dbReference>
<dbReference type="SUPFAM" id="SSF51735">
    <property type="entry name" value="NAD(P)-binding Rossmann-fold domains"/>
    <property type="match status" value="1"/>
</dbReference>
<proteinExistence type="inferred from homology"/>
<evidence type="ECO:0000250" key="1">
    <source>
        <dbReference type="UniProtKB" id="P0A9J4"/>
    </source>
</evidence>
<evidence type="ECO:0000305" key="2"/>
<comment type="function">
    <text evidence="1">Catalyzes the NADPH-dependent reduction of ketopantoate into pantoic acid.</text>
</comment>
<comment type="catalytic activity">
    <reaction evidence="1">
        <text>(R)-pantoate + NADP(+) = 2-dehydropantoate + NADPH + H(+)</text>
        <dbReference type="Rhea" id="RHEA:16233"/>
        <dbReference type="ChEBI" id="CHEBI:11561"/>
        <dbReference type="ChEBI" id="CHEBI:15378"/>
        <dbReference type="ChEBI" id="CHEBI:15980"/>
        <dbReference type="ChEBI" id="CHEBI:57783"/>
        <dbReference type="ChEBI" id="CHEBI:58349"/>
        <dbReference type="EC" id="1.1.1.169"/>
    </reaction>
</comment>
<comment type="pathway">
    <text evidence="1">Cofactor biosynthesis; (R)-pantothenate biosynthesis; (R)-pantoate from 3-methyl-2-oxobutanoate: step 2/2.</text>
</comment>
<comment type="subcellular location">
    <subcellularLocation>
        <location evidence="1">Cytoplasm</location>
    </subcellularLocation>
</comment>
<comment type="similarity">
    <text evidence="2">Belongs to the ketopantoate reductase family.</text>
</comment>
<name>PANE_LISIN</name>